<gene>
    <name evidence="1" type="primary">gpmA</name>
    <name type="ordered locus">SH0636</name>
</gene>
<proteinExistence type="inferred from homology"/>
<name>GPMA_STAHJ</name>
<reference key="1">
    <citation type="journal article" date="2005" name="J. Bacteriol.">
        <title>Whole-genome sequencing of Staphylococcus haemolyticus uncovers the extreme plasticity of its genome and the evolution of human-colonizing staphylococcal species.</title>
        <authorList>
            <person name="Takeuchi F."/>
            <person name="Watanabe S."/>
            <person name="Baba T."/>
            <person name="Yuzawa H."/>
            <person name="Ito T."/>
            <person name="Morimoto Y."/>
            <person name="Kuroda M."/>
            <person name="Cui L."/>
            <person name="Takahashi M."/>
            <person name="Ankai A."/>
            <person name="Baba S."/>
            <person name="Fukui S."/>
            <person name="Lee J.C."/>
            <person name="Hiramatsu K."/>
        </authorList>
    </citation>
    <scope>NUCLEOTIDE SEQUENCE [LARGE SCALE GENOMIC DNA]</scope>
    <source>
        <strain>JCSC1435</strain>
    </source>
</reference>
<sequence>MPKLILCRHGQSEWNAKNLFTGWEDVQLSEQGRNEAITSGRKLKENGIEIDVAFTSLLTRALETTQFLLAESDQEWIPVHKSWRLNERHYGKLQGLNKDEARKEFGEEQVHQWRRSYDVKPPAQTEEQRESYLKDRRYRHLDHRMMPYSESLKTTLERVVPIWTDKISQHLLDGETVLVAAHGNSIRALIKYLDNVSDEDIIGYEIKTGAPLIYELDDNLNVIDHYYL</sequence>
<protein>
    <recommendedName>
        <fullName evidence="1">2,3-bisphosphoglycerate-dependent phosphoglycerate mutase</fullName>
        <shortName evidence="1">BPG-dependent PGAM</shortName>
        <shortName evidence="1">PGAM</shortName>
        <shortName evidence="1">Phosphoglyceromutase</shortName>
        <shortName evidence="1">dPGM</shortName>
        <ecNumber evidence="1">5.4.2.11</ecNumber>
    </recommendedName>
</protein>
<accession>Q4L8T0</accession>
<feature type="chain" id="PRO_0000179918" description="2,3-bisphosphoglycerate-dependent phosphoglycerate mutase">
    <location>
        <begin position="1"/>
        <end position="228"/>
    </location>
</feature>
<feature type="active site" description="Tele-phosphohistidine intermediate" evidence="1">
    <location>
        <position position="9"/>
    </location>
</feature>
<feature type="active site" description="Proton donor/acceptor" evidence="1">
    <location>
        <position position="87"/>
    </location>
</feature>
<feature type="binding site" evidence="1">
    <location>
        <begin position="8"/>
        <end position="15"/>
    </location>
    <ligand>
        <name>substrate</name>
    </ligand>
</feature>
<feature type="binding site" evidence="1">
    <location>
        <begin position="21"/>
        <end position="22"/>
    </location>
    <ligand>
        <name>substrate</name>
    </ligand>
</feature>
<feature type="binding site" evidence="1">
    <location>
        <position position="60"/>
    </location>
    <ligand>
        <name>substrate</name>
    </ligand>
</feature>
<feature type="binding site" evidence="1">
    <location>
        <begin position="87"/>
        <end position="90"/>
    </location>
    <ligand>
        <name>substrate</name>
    </ligand>
</feature>
<feature type="binding site" evidence="1">
    <location>
        <position position="98"/>
    </location>
    <ligand>
        <name>substrate</name>
    </ligand>
</feature>
<feature type="binding site" evidence="1">
    <location>
        <begin position="114"/>
        <end position="115"/>
    </location>
    <ligand>
        <name>substrate</name>
    </ligand>
</feature>
<feature type="binding site" evidence="1">
    <location>
        <begin position="183"/>
        <end position="184"/>
    </location>
    <ligand>
        <name>substrate</name>
    </ligand>
</feature>
<feature type="site" description="Transition state stabilizer" evidence="1">
    <location>
        <position position="182"/>
    </location>
</feature>
<evidence type="ECO:0000255" key="1">
    <source>
        <dbReference type="HAMAP-Rule" id="MF_01039"/>
    </source>
</evidence>
<organism>
    <name type="scientific">Staphylococcus haemolyticus (strain JCSC1435)</name>
    <dbReference type="NCBI Taxonomy" id="279808"/>
    <lineage>
        <taxon>Bacteria</taxon>
        <taxon>Bacillati</taxon>
        <taxon>Bacillota</taxon>
        <taxon>Bacilli</taxon>
        <taxon>Bacillales</taxon>
        <taxon>Staphylococcaceae</taxon>
        <taxon>Staphylococcus</taxon>
    </lineage>
</organism>
<comment type="function">
    <text evidence="1">Catalyzes the interconversion of 2-phosphoglycerate and 3-phosphoglycerate.</text>
</comment>
<comment type="catalytic activity">
    <reaction evidence="1">
        <text>(2R)-2-phosphoglycerate = (2R)-3-phosphoglycerate</text>
        <dbReference type="Rhea" id="RHEA:15901"/>
        <dbReference type="ChEBI" id="CHEBI:58272"/>
        <dbReference type="ChEBI" id="CHEBI:58289"/>
        <dbReference type="EC" id="5.4.2.11"/>
    </reaction>
</comment>
<comment type="pathway">
    <text evidence="1">Carbohydrate degradation; glycolysis; pyruvate from D-glyceraldehyde 3-phosphate: step 3/5.</text>
</comment>
<comment type="similarity">
    <text evidence="1">Belongs to the phosphoglycerate mutase family. BPG-dependent PGAM subfamily.</text>
</comment>
<dbReference type="EC" id="5.4.2.11" evidence="1"/>
<dbReference type="EMBL" id="AP006716">
    <property type="protein sequence ID" value="BAE03945.1"/>
    <property type="molecule type" value="Genomic_DNA"/>
</dbReference>
<dbReference type="RefSeq" id="WP_011274961.1">
    <property type="nucleotide sequence ID" value="NC_007168.1"/>
</dbReference>
<dbReference type="SMR" id="Q4L8T0"/>
<dbReference type="KEGG" id="sha:SH0636"/>
<dbReference type="eggNOG" id="COG0588">
    <property type="taxonomic scope" value="Bacteria"/>
</dbReference>
<dbReference type="HOGENOM" id="CLU_033323_1_5_9"/>
<dbReference type="OrthoDB" id="9781415at2"/>
<dbReference type="UniPathway" id="UPA00109">
    <property type="reaction ID" value="UER00186"/>
</dbReference>
<dbReference type="Proteomes" id="UP000000543">
    <property type="component" value="Chromosome"/>
</dbReference>
<dbReference type="GO" id="GO:0004619">
    <property type="term" value="F:phosphoglycerate mutase activity"/>
    <property type="evidence" value="ECO:0007669"/>
    <property type="project" value="UniProtKB-EC"/>
</dbReference>
<dbReference type="GO" id="GO:0006094">
    <property type="term" value="P:gluconeogenesis"/>
    <property type="evidence" value="ECO:0007669"/>
    <property type="project" value="UniProtKB-UniRule"/>
</dbReference>
<dbReference type="GO" id="GO:0006096">
    <property type="term" value="P:glycolytic process"/>
    <property type="evidence" value="ECO:0007669"/>
    <property type="project" value="UniProtKB-UniRule"/>
</dbReference>
<dbReference type="CDD" id="cd07067">
    <property type="entry name" value="HP_PGM_like"/>
    <property type="match status" value="1"/>
</dbReference>
<dbReference type="FunFam" id="3.40.50.1240:FF:000003">
    <property type="entry name" value="2,3-bisphosphoglycerate-dependent phosphoglycerate mutase"/>
    <property type="match status" value="1"/>
</dbReference>
<dbReference type="Gene3D" id="3.40.50.1240">
    <property type="entry name" value="Phosphoglycerate mutase-like"/>
    <property type="match status" value="1"/>
</dbReference>
<dbReference type="HAMAP" id="MF_01039">
    <property type="entry name" value="PGAM_GpmA"/>
    <property type="match status" value="1"/>
</dbReference>
<dbReference type="InterPro" id="IPR013078">
    <property type="entry name" value="His_Pase_superF_clade-1"/>
</dbReference>
<dbReference type="InterPro" id="IPR029033">
    <property type="entry name" value="His_PPase_superfam"/>
</dbReference>
<dbReference type="InterPro" id="IPR001345">
    <property type="entry name" value="PG/BPGM_mutase_AS"/>
</dbReference>
<dbReference type="InterPro" id="IPR005952">
    <property type="entry name" value="Phosphogly_mut1"/>
</dbReference>
<dbReference type="NCBIfam" id="TIGR01258">
    <property type="entry name" value="pgm_1"/>
    <property type="match status" value="1"/>
</dbReference>
<dbReference type="NCBIfam" id="NF010713">
    <property type="entry name" value="PRK14115.1"/>
    <property type="match status" value="1"/>
</dbReference>
<dbReference type="NCBIfam" id="NF010717">
    <property type="entry name" value="PRK14119.1"/>
    <property type="match status" value="1"/>
</dbReference>
<dbReference type="PANTHER" id="PTHR11931">
    <property type="entry name" value="PHOSPHOGLYCERATE MUTASE"/>
    <property type="match status" value="1"/>
</dbReference>
<dbReference type="Pfam" id="PF00300">
    <property type="entry name" value="His_Phos_1"/>
    <property type="match status" value="1"/>
</dbReference>
<dbReference type="SMART" id="SM00855">
    <property type="entry name" value="PGAM"/>
    <property type="match status" value="1"/>
</dbReference>
<dbReference type="SUPFAM" id="SSF53254">
    <property type="entry name" value="Phosphoglycerate mutase-like"/>
    <property type="match status" value="1"/>
</dbReference>
<dbReference type="PROSITE" id="PS00175">
    <property type="entry name" value="PG_MUTASE"/>
    <property type="match status" value="1"/>
</dbReference>
<keyword id="KW-0312">Gluconeogenesis</keyword>
<keyword id="KW-0324">Glycolysis</keyword>
<keyword id="KW-0413">Isomerase</keyword>